<dbReference type="EMBL" id="AP002746">
    <property type="protein sequence ID" value="BAB12694.1"/>
    <property type="molecule type" value="Genomic_DNA"/>
</dbReference>
<dbReference type="EMBL" id="AP008207">
    <property type="protein sequence ID" value="BAF04190.1"/>
    <property type="molecule type" value="Genomic_DNA"/>
</dbReference>
<dbReference type="EMBL" id="AP014957">
    <property type="protein sequence ID" value="BAS70829.1"/>
    <property type="molecule type" value="Genomic_DNA"/>
</dbReference>
<dbReference type="EMBL" id="AK100770">
    <property type="status" value="NOT_ANNOTATED_CDS"/>
    <property type="molecule type" value="mRNA"/>
</dbReference>
<dbReference type="RefSeq" id="XP_015621800.1">
    <property type="nucleotide sequence ID" value="XM_015766314.1"/>
</dbReference>
<dbReference type="FunCoup" id="Q9FU27">
    <property type="interactions" value="1226"/>
</dbReference>
<dbReference type="STRING" id="39947.Q9FU27"/>
<dbReference type="PaxDb" id="39947-Q9FU27"/>
<dbReference type="EnsemblPlants" id="Os01t0192000-01">
    <property type="protein sequence ID" value="Os01t0192000-01"/>
    <property type="gene ID" value="Os01g0192000"/>
</dbReference>
<dbReference type="Gramene" id="Os01t0192000-01">
    <property type="protein sequence ID" value="Os01t0192000-01"/>
    <property type="gene ID" value="Os01g0192000"/>
</dbReference>
<dbReference type="KEGG" id="dosa:Os01g0192000"/>
<dbReference type="eggNOG" id="KOG1595">
    <property type="taxonomic scope" value="Eukaryota"/>
</dbReference>
<dbReference type="HOGENOM" id="CLU_044407_0_0_1"/>
<dbReference type="InParanoid" id="Q9FU27"/>
<dbReference type="OMA" id="PENLDIW"/>
<dbReference type="OrthoDB" id="410307at2759"/>
<dbReference type="Proteomes" id="UP000000763">
    <property type="component" value="Chromosome 1"/>
</dbReference>
<dbReference type="Proteomes" id="UP000059680">
    <property type="component" value="Chromosome 1"/>
</dbReference>
<dbReference type="ExpressionAtlas" id="Q9FU27">
    <property type="expression patterns" value="baseline and differential"/>
</dbReference>
<dbReference type="GO" id="GO:0005634">
    <property type="term" value="C:nucleus"/>
    <property type="evidence" value="ECO:0000314"/>
    <property type="project" value="Gramene"/>
</dbReference>
<dbReference type="GO" id="GO:0003677">
    <property type="term" value="F:DNA binding"/>
    <property type="evidence" value="ECO:0007669"/>
    <property type="project" value="UniProtKB-KW"/>
</dbReference>
<dbReference type="GO" id="GO:0008270">
    <property type="term" value="F:zinc ion binding"/>
    <property type="evidence" value="ECO:0000305"/>
    <property type="project" value="Gramene"/>
</dbReference>
<dbReference type="GO" id="GO:0009867">
    <property type="term" value="P:jasmonic acid mediated signaling pathway"/>
    <property type="evidence" value="ECO:0000315"/>
    <property type="project" value="Gramene"/>
</dbReference>
<dbReference type="GO" id="GO:0010150">
    <property type="term" value="P:leaf senescence"/>
    <property type="evidence" value="ECO:0000315"/>
    <property type="project" value="Gramene"/>
</dbReference>
<dbReference type="FunFam" id="3.30.1370.210:FF:000009">
    <property type="entry name" value="Zinc finger CCCH domain-containing protein 66"/>
    <property type="match status" value="1"/>
</dbReference>
<dbReference type="Gene3D" id="3.30.1370.210">
    <property type="match status" value="1"/>
</dbReference>
<dbReference type="InterPro" id="IPR045234">
    <property type="entry name" value="Unkempt-like"/>
</dbReference>
<dbReference type="InterPro" id="IPR000571">
    <property type="entry name" value="Znf_CCCH"/>
</dbReference>
<dbReference type="PANTHER" id="PTHR14493">
    <property type="entry name" value="UNKEMPT FAMILY MEMBER"/>
    <property type="match status" value="1"/>
</dbReference>
<dbReference type="PANTHER" id="PTHR14493:SF155">
    <property type="entry name" value="ZINC FINGER CCCH DOMAIN-CONTAINING PROTEIN 20"/>
    <property type="match status" value="1"/>
</dbReference>
<dbReference type="Pfam" id="PF00642">
    <property type="entry name" value="zf-CCCH"/>
    <property type="match status" value="1"/>
</dbReference>
<dbReference type="Pfam" id="PF25512">
    <property type="entry name" value="zf-CCCH_AtC3H23"/>
    <property type="match status" value="1"/>
</dbReference>
<dbReference type="SMART" id="SM00356">
    <property type="entry name" value="ZnF_C3H1"/>
    <property type="match status" value="2"/>
</dbReference>
<dbReference type="PROSITE" id="PS50103">
    <property type="entry name" value="ZF_C3H1"/>
    <property type="match status" value="2"/>
</dbReference>
<feature type="chain" id="PRO_0000346801" description="Zinc finger CCCH domain-containing protein 2">
    <location>
        <begin position="1"/>
        <end position="386"/>
    </location>
</feature>
<feature type="zinc finger region" description="C3H1-type 1" evidence="1">
    <location>
        <begin position="116"/>
        <end position="143"/>
    </location>
</feature>
<feature type="zinc finger region" description="C3H1-type 2" evidence="1">
    <location>
        <begin position="151"/>
        <end position="175"/>
    </location>
</feature>
<feature type="region of interest" description="Disordered" evidence="2">
    <location>
        <begin position="180"/>
        <end position="200"/>
    </location>
</feature>
<feature type="region of interest" description="Disordered" evidence="2">
    <location>
        <begin position="220"/>
        <end position="252"/>
    </location>
</feature>
<feature type="compositionally biased region" description="Polar residues" evidence="2">
    <location>
        <begin position="182"/>
        <end position="192"/>
    </location>
</feature>
<feature type="compositionally biased region" description="Low complexity" evidence="2">
    <location>
        <begin position="220"/>
        <end position="229"/>
    </location>
</feature>
<feature type="compositionally biased region" description="Pro residues" evidence="2">
    <location>
        <begin position="230"/>
        <end position="241"/>
    </location>
</feature>
<proteinExistence type="evidence at transcript level"/>
<keyword id="KW-0238">DNA-binding</keyword>
<keyword id="KW-1184">Jasmonic acid signaling pathway</keyword>
<keyword id="KW-0479">Metal-binding</keyword>
<keyword id="KW-0539">Nucleus</keyword>
<keyword id="KW-1185">Reference proteome</keyword>
<keyword id="KW-0677">Repeat</keyword>
<keyword id="KW-0862">Zinc</keyword>
<keyword id="KW-0863">Zinc-finger</keyword>
<protein>
    <recommendedName>
        <fullName>Zinc finger CCCH domain-containing protein 2</fullName>
        <shortName>OsC3H2</shortName>
    </recommendedName>
    <alternativeName>
        <fullName>Protein DELAY OF THE ONSET OF SENESCENCE</fullName>
        <shortName>OsDOS</shortName>
    </alternativeName>
</protein>
<comment type="function">
    <text evidence="3">Involved in leaf senescence delay. May repress jasmonic acid (JA) signaling role in promoting leaf senescence. May regulate panicle development and pollination/fertilization process.</text>
</comment>
<comment type="subcellular location">
    <subcellularLocation>
        <location evidence="3">Nucleus</location>
    </subcellularLocation>
</comment>
<comment type="developmental stage">
    <text evidence="3">Expressed in leaf and panicles, but is down-regulated during natural leaf senescence, panicle development and pollination.</text>
</comment>
<organism>
    <name type="scientific">Oryza sativa subsp. japonica</name>
    <name type="common">Rice</name>
    <dbReference type="NCBI Taxonomy" id="39947"/>
    <lineage>
        <taxon>Eukaryota</taxon>
        <taxon>Viridiplantae</taxon>
        <taxon>Streptophyta</taxon>
        <taxon>Embryophyta</taxon>
        <taxon>Tracheophyta</taxon>
        <taxon>Spermatophyta</taxon>
        <taxon>Magnoliopsida</taxon>
        <taxon>Liliopsida</taxon>
        <taxon>Poales</taxon>
        <taxon>Poaceae</taxon>
        <taxon>BOP clade</taxon>
        <taxon>Oryzoideae</taxon>
        <taxon>Oryzeae</taxon>
        <taxon>Oryzinae</taxon>
        <taxon>Oryza</taxon>
        <taxon>Oryza sativa</taxon>
    </lineage>
</organism>
<reference key="1">
    <citation type="journal article" date="2002" name="Nature">
        <title>The genome sequence and structure of rice chromosome 1.</title>
        <authorList>
            <person name="Sasaki T."/>
            <person name="Matsumoto T."/>
            <person name="Yamamoto K."/>
            <person name="Sakata K."/>
            <person name="Baba T."/>
            <person name="Katayose Y."/>
            <person name="Wu J."/>
            <person name="Niimura Y."/>
            <person name="Cheng Z."/>
            <person name="Nagamura Y."/>
            <person name="Antonio B.A."/>
            <person name="Kanamori H."/>
            <person name="Hosokawa S."/>
            <person name="Masukawa M."/>
            <person name="Arikawa K."/>
            <person name="Chiden Y."/>
            <person name="Hayashi M."/>
            <person name="Okamoto M."/>
            <person name="Ando T."/>
            <person name="Aoki H."/>
            <person name="Arita K."/>
            <person name="Hamada M."/>
            <person name="Harada C."/>
            <person name="Hijishita S."/>
            <person name="Honda M."/>
            <person name="Ichikawa Y."/>
            <person name="Idonuma A."/>
            <person name="Iijima M."/>
            <person name="Ikeda M."/>
            <person name="Ikeno M."/>
            <person name="Ito S."/>
            <person name="Ito T."/>
            <person name="Ito Y."/>
            <person name="Ito Y."/>
            <person name="Iwabuchi A."/>
            <person name="Kamiya K."/>
            <person name="Karasawa W."/>
            <person name="Katagiri S."/>
            <person name="Kikuta A."/>
            <person name="Kobayashi N."/>
            <person name="Kono I."/>
            <person name="Machita K."/>
            <person name="Maehara T."/>
            <person name="Mizuno H."/>
            <person name="Mizubayashi T."/>
            <person name="Mukai Y."/>
            <person name="Nagasaki H."/>
            <person name="Nakashima M."/>
            <person name="Nakama Y."/>
            <person name="Nakamichi Y."/>
            <person name="Nakamura M."/>
            <person name="Namiki N."/>
            <person name="Negishi M."/>
            <person name="Ohta I."/>
            <person name="Ono N."/>
            <person name="Saji S."/>
            <person name="Sakai K."/>
            <person name="Shibata M."/>
            <person name="Shimokawa T."/>
            <person name="Shomura A."/>
            <person name="Song J."/>
            <person name="Takazaki Y."/>
            <person name="Terasawa K."/>
            <person name="Tsuji K."/>
            <person name="Waki K."/>
            <person name="Yamagata H."/>
            <person name="Yamane H."/>
            <person name="Yoshiki S."/>
            <person name="Yoshihara R."/>
            <person name="Yukawa K."/>
            <person name="Zhong H."/>
            <person name="Iwama H."/>
            <person name="Endo T."/>
            <person name="Ito H."/>
            <person name="Hahn J.H."/>
            <person name="Kim H.-I."/>
            <person name="Eun M.-Y."/>
            <person name="Yano M."/>
            <person name="Jiang J."/>
            <person name="Gojobori T."/>
        </authorList>
    </citation>
    <scope>NUCLEOTIDE SEQUENCE [LARGE SCALE GENOMIC DNA]</scope>
    <source>
        <strain>cv. Nipponbare</strain>
    </source>
</reference>
<reference key="2">
    <citation type="journal article" date="2005" name="Nature">
        <title>The map-based sequence of the rice genome.</title>
        <authorList>
            <consortium name="International rice genome sequencing project (IRGSP)"/>
        </authorList>
    </citation>
    <scope>NUCLEOTIDE SEQUENCE [LARGE SCALE GENOMIC DNA]</scope>
    <source>
        <strain>cv. Nipponbare</strain>
    </source>
</reference>
<reference key="3">
    <citation type="journal article" date="2008" name="Nucleic Acids Res.">
        <title>The rice annotation project database (RAP-DB): 2008 update.</title>
        <authorList>
            <consortium name="The rice annotation project (RAP)"/>
        </authorList>
    </citation>
    <scope>GENOME REANNOTATION</scope>
    <source>
        <strain>cv. Nipponbare</strain>
    </source>
</reference>
<reference key="4">
    <citation type="journal article" date="2013" name="Rice">
        <title>Improvement of the Oryza sativa Nipponbare reference genome using next generation sequence and optical map data.</title>
        <authorList>
            <person name="Kawahara Y."/>
            <person name="de la Bastide M."/>
            <person name="Hamilton J.P."/>
            <person name="Kanamori H."/>
            <person name="McCombie W.R."/>
            <person name="Ouyang S."/>
            <person name="Schwartz D.C."/>
            <person name="Tanaka T."/>
            <person name="Wu J."/>
            <person name="Zhou S."/>
            <person name="Childs K.L."/>
            <person name="Davidson R.M."/>
            <person name="Lin H."/>
            <person name="Quesada-Ocampo L."/>
            <person name="Vaillancourt B."/>
            <person name="Sakai H."/>
            <person name="Lee S.S."/>
            <person name="Kim J."/>
            <person name="Numa H."/>
            <person name="Itoh T."/>
            <person name="Buell C.R."/>
            <person name="Matsumoto T."/>
        </authorList>
    </citation>
    <scope>GENOME REANNOTATION</scope>
    <source>
        <strain>cv. Nipponbare</strain>
    </source>
</reference>
<reference key="5">
    <citation type="journal article" date="2003" name="Science">
        <title>Collection, mapping, and annotation of over 28,000 cDNA clones from japonica rice.</title>
        <authorList>
            <consortium name="The rice full-length cDNA consortium"/>
        </authorList>
    </citation>
    <scope>NUCLEOTIDE SEQUENCE [LARGE SCALE MRNA]</scope>
    <source>
        <strain>cv. Nipponbare</strain>
    </source>
</reference>
<reference key="6">
    <citation type="journal article" date="2006" name="Plant Physiol.">
        <title>A novel nuclear-localized CCCH-type zinc finger protein, OsDOS, is involved in delaying leaf senescence in rice.</title>
        <authorList>
            <person name="Kong Z."/>
            <person name="Li M."/>
            <person name="Yang W."/>
            <person name="Xu W."/>
            <person name="Xue Y."/>
        </authorList>
    </citation>
    <scope>FUNCTION</scope>
    <scope>DEVELOPMENTAL STAGE</scope>
    <scope>SUBCELLULAR LOCATION</scope>
</reference>
<reference key="7">
    <citation type="journal article" date="2008" name="BMC Genomics">
        <title>Genome-wide analysis of CCCH zinc finger family in Arabidopsis and rice.</title>
        <authorList>
            <person name="Wang D."/>
            <person name="Guo Y."/>
            <person name="Wu C."/>
            <person name="Yang G."/>
            <person name="Li Y."/>
            <person name="Zheng C."/>
        </authorList>
    </citation>
    <scope>NOMENCLATURE</scope>
</reference>
<name>C3H2_ORYSJ</name>
<sequence>MMMMGEGVSSVPPWSHLPVSGVDVLGGGGGGGDEMTPYVIAALRDYLPANDVGVGADEEEEAAAMAAAVDAYACDEFRMYEFKVRRCARGRSHDWTECPFAHPGEKARRRDPRKYHYSGTACPDFRKGGCKRGDACEYAHGVFECWLHPARYRTQPCKDGTACRRRVCFFAHTPDQLRVLPAQQSSPRSVASSPLAESYDGSPLRRQAFESYLTKTIMSSSPTSTLMSPPKSPPSESPPLSPDGAAAIRRGSWPGVGSPVNDVLASFRQLRLNKVKSSPSGGWSYPSSSAVYGSPKAATGLYSLPTTPLASTATVTTASSFMPNLEPLDLGLIGDEEPVQRVESGRALREKVFERLSRDGAISGDATAFATAGVGLDVDWVSDLIN</sequence>
<evidence type="ECO:0000255" key="1">
    <source>
        <dbReference type="PROSITE-ProRule" id="PRU00723"/>
    </source>
</evidence>
<evidence type="ECO:0000256" key="2">
    <source>
        <dbReference type="SAM" id="MobiDB-lite"/>
    </source>
</evidence>
<evidence type="ECO:0000269" key="3">
    <source>
    </source>
</evidence>
<gene>
    <name type="ordered locus">Os01g0192000</name>
    <name type="ordered locus">LOC_Os01g09620</name>
    <name type="ORF">P0671B11.13</name>
</gene>
<accession>Q9FU27</accession>